<keyword id="KW-0963">Cytoplasm</keyword>
<keyword id="KW-0548">Nucleotidyltransferase</keyword>
<keyword id="KW-0539">Nucleus</keyword>
<keyword id="KW-1185">Reference proteome</keyword>
<keyword id="KW-0808">Transferase</keyword>
<protein>
    <recommendedName>
        <fullName evidence="3">Terminal nucleotidyltransferase 5B</fullName>
        <ecNumber evidence="1">2.7.7.19</ecNumber>
    </recommendedName>
    <alternativeName>
        <fullName>Non-canonical poly(A) polymerase FAM46B</fullName>
    </alternativeName>
</protein>
<dbReference type="EC" id="2.7.7.19" evidence="1"/>
<dbReference type="EMBL" id="CH473968">
    <property type="protein sequence ID" value="EDL80668.1"/>
    <property type="molecule type" value="Genomic_DNA"/>
</dbReference>
<dbReference type="EMBL" id="BC158863">
    <property type="protein sequence ID" value="AAI58864.1"/>
    <property type="molecule type" value="mRNA"/>
</dbReference>
<dbReference type="RefSeq" id="NP_001101377.1">
    <property type="nucleotide sequence ID" value="NM_001107907.2"/>
</dbReference>
<dbReference type="SMR" id="B0BNK8"/>
<dbReference type="FunCoup" id="B0BNK8">
    <property type="interactions" value="68"/>
</dbReference>
<dbReference type="STRING" id="10116.ENSRNOP00000070098"/>
<dbReference type="GlyGen" id="B0BNK8">
    <property type="glycosylation" value="1 site"/>
</dbReference>
<dbReference type="PhosphoSitePlus" id="B0BNK8"/>
<dbReference type="PaxDb" id="10116-ENSRNOP00000010487"/>
<dbReference type="Ensembl" id="ENSRNOT00000086144.2">
    <property type="protein sequence ID" value="ENSRNOP00000070098.1"/>
    <property type="gene ID" value="ENSRNOG00000056153.2"/>
</dbReference>
<dbReference type="GeneID" id="313019"/>
<dbReference type="KEGG" id="rno:313019"/>
<dbReference type="UCSC" id="RGD:1308967">
    <property type="organism name" value="rat"/>
</dbReference>
<dbReference type="AGR" id="RGD:1308967"/>
<dbReference type="CTD" id="115572"/>
<dbReference type="RGD" id="1308967">
    <property type="gene designation" value="Tent5b"/>
</dbReference>
<dbReference type="eggNOG" id="KOG3852">
    <property type="taxonomic scope" value="Eukaryota"/>
</dbReference>
<dbReference type="GeneTree" id="ENSGT00940000160747"/>
<dbReference type="HOGENOM" id="CLU_008115_2_0_1"/>
<dbReference type="InParanoid" id="B0BNK8"/>
<dbReference type="OMA" id="CVHSVRL"/>
<dbReference type="OrthoDB" id="10065073at2759"/>
<dbReference type="PhylomeDB" id="B0BNK8"/>
<dbReference type="TreeFam" id="TF315239"/>
<dbReference type="PRO" id="PR:B0BNK8"/>
<dbReference type="Proteomes" id="UP000002494">
    <property type="component" value="Chromosome 5"/>
</dbReference>
<dbReference type="Proteomes" id="UP000234681">
    <property type="component" value="Chromosome 5"/>
</dbReference>
<dbReference type="Bgee" id="ENSRNOG00000056153">
    <property type="expression patterns" value="Expressed in esophagus and 11 other cell types or tissues"/>
</dbReference>
<dbReference type="GO" id="GO:0005737">
    <property type="term" value="C:cytoplasm"/>
    <property type="evidence" value="ECO:0000250"/>
    <property type="project" value="UniProtKB"/>
</dbReference>
<dbReference type="GO" id="GO:0005634">
    <property type="term" value="C:nucleus"/>
    <property type="evidence" value="ECO:0000250"/>
    <property type="project" value="UniProtKB"/>
</dbReference>
<dbReference type="GO" id="GO:1990817">
    <property type="term" value="F:poly(A) RNA polymerase activity"/>
    <property type="evidence" value="ECO:0000250"/>
    <property type="project" value="UniProtKB"/>
</dbReference>
<dbReference type="GO" id="GO:0048255">
    <property type="term" value="P:mRNA stabilization"/>
    <property type="evidence" value="ECO:0000318"/>
    <property type="project" value="GO_Central"/>
</dbReference>
<dbReference type="GO" id="GO:0043066">
    <property type="term" value="P:negative regulation of apoptotic process"/>
    <property type="evidence" value="ECO:0000250"/>
    <property type="project" value="UniProtKB"/>
</dbReference>
<dbReference type="GO" id="GO:0045786">
    <property type="term" value="P:negative regulation of cell cycle"/>
    <property type="evidence" value="ECO:0000250"/>
    <property type="project" value="UniProtKB"/>
</dbReference>
<dbReference type="GO" id="GO:0008285">
    <property type="term" value="P:negative regulation of cell population proliferation"/>
    <property type="evidence" value="ECO:0000250"/>
    <property type="project" value="UniProtKB"/>
</dbReference>
<dbReference type="GO" id="GO:0045727">
    <property type="term" value="P:positive regulation of translation"/>
    <property type="evidence" value="ECO:0000250"/>
    <property type="project" value="UniProtKB"/>
</dbReference>
<dbReference type="InterPro" id="IPR012937">
    <property type="entry name" value="TET5"/>
</dbReference>
<dbReference type="PANTHER" id="PTHR12974">
    <property type="entry name" value="PRION-LIKE- Q/N-RICH -DOMAIN-BEARING PROTEIN PROTEIN 44"/>
    <property type="match status" value="1"/>
</dbReference>
<dbReference type="PANTHER" id="PTHR12974:SF46">
    <property type="entry name" value="TERMINAL NUCLEOTIDYLTRANSFERASE 5B"/>
    <property type="match status" value="1"/>
</dbReference>
<dbReference type="Pfam" id="PF07984">
    <property type="entry name" value="NTP_transf_7"/>
    <property type="match status" value="1"/>
</dbReference>
<dbReference type="SMART" id="SM01153">
    <property type="entry name" value="DUF1693"/>
    <property type="match status" value="1"/>
</dbReference>
<comment type="function">
    <text evidence="1">Catalyzes the transfer of one adenosine molecule from an ATP to an mRNA poly(A) tail bearing a 3'-OH terminal group in an ATP hydrolysis-dependent manner. May be involved in maintaining the translation efficiency of at least some genes through preventing degradation of their mRNAs. Prefers RNA molecules that are adenosine-rich close to 3'-end. In addition, may inhibit cell proliferation and cell cycle progression through ubiquitination of beta-catenin/CTNNB1.</text>
</comment>
<comment type="catalytic activity">
    <reaction evidence="1">
        <text>RNA(n) + ATP = RNA(n)-3'-adenine ribonucleotide + diphosphate</text>
        <dbReference type="Rhea" id="RHEA:11332"/>
        <dbReference type="Rhea" id="RHEA-COMP:14527"/>
        <dbReference type="Rhea" id="RHEA-COMP:17347"/>
        <dbReference type="ChEBI" id="CHEBI:30616"/>
        <dbReference type="ChEBI" id="CHEBI:33019"/>
        <dbReference type="ChEBI" id="CHEBI:140395"/>
        <dbReference type="ChEBI" id="CHEBI:173115"/>
        <dbReference type="EC" id="2.7.7.19"/>
    </reaction>
    <physiologicalReaction direction="left-to-right" evidence="1">
        <dbReference type="Rhea" id="RHEA:11333"/>
    </physiologicalReaction>
</comment>
<comment type="subcellular location">
    <subcellularLocation>
        <location evidence="1">Cytoplasm</location>
    </subcellularLocation>
    <subcellularLocation>
        <location evidence="1">Nucleus</location>
    </subcellularLocation>
</comment>
<comment type="similarity">
    <text evidence="3">Belongs to the TENT family.</text>
</comment>
<comment type="caution">
    <text evidence="3">It is uncertain whether Met-1 or Met-2 is the initiator.</text>
</comment>
<evidence type="ECO:0000250" key="1">
    <source>
        <dbReference type="UniProtKB" id="Q96A09"/>
    </source>
</evidence>
<evidence type="ECO:0000256" key="2">
    <source>
        <dbReference type="SAM" id="MobiDB-lite"/>
    </source>
</evidence>
<evidence type="ECO:0000305" key="3"/>
<evidence type="ECO:0000312" key="4">
    <source>
        <dbReference type="RGD" id="1308967"/>
    </source>
</evidence>
<name>TET5B_RAT</name>
<organism>
    <name type="scientific">Rattus norvegicus</name>
    <name type="common">Rat</name>
    <dbReference type="NCBI Taxonomy" id="10116"/>
    <lineage>
        <taxon>Eukaryota</taxon>
        <taxon>Metazoa</taxon>
        <taxon>Chordata</taxon>
        <taxon>Craniata</taxon>
        <taxon>Vertebrata</taxon>
        <taxon>Euteleostomi</taxon>
        <taxon>Mammalia</taxon>
        <taxon>Eutheria</taxon>
        <taxon>Euarchontoglires</taxon>
        <taxon>Glires</taxon>
        <taxon>Rodentia</taxon>
        <taxon>Myomorpha</taxon>
        <taxon>Muroidea</taxon>
        <taxon>Muridae</taxon>
        <taxon>Murinae</taxon>
        <taxon>Rattus</taxon>
    </lineage>
</organism>
<gene>
    <name evidence="4" type="primary">Tent5b</name>
    <name evidence="4" type="synonym">Fam46b</name>
</gene>
<proteinExistence type="evidence at transcript level"/>
<accession>B0BNK8</accession>
<sequence>MMPSESGDESLEQPAAQVGTGAASAVATAGAAGGGPDLEASSASLGRHQSRLSWPQVKRLDALLKEPIPIHGRGNFPTLSVQPQQIVQVVRSSLEEQGLHVHSVRLHGSAASHVLHPESGLGYKDLDLVFQMDLQSEASFQLTKAVVLACLLDFLPAGVSRAKITPLTLKEAYVQKLVKVCTDLDRWSLISLSNKSGKNVELKFVDSVRRQFEFSIDSFQIILDSLLLFGQCSSTPMSEAFHPTVTGESLYGDFAEALEHLQHRVIATRSPEEIRGGGLLKYCHLLVRGFRPRPSTDVRALQRYMCSRFFIDFPDPVEQRRILERYLEAHFGGAEAARRYACLVTLHRVVNESTVCLMSHERRQTLDLITMLALQALAEQGPAAMAALAWRRPGSDGVVPATVNYYVTPMQPLLPRAHSYPTWLPCN</sequence>
<reference key="1">
    <citation type="submission" date="2005-07" db="EMBL/GenBank/DDBJ databases">
        <authorList>
            <person name="Mural R.J."/>
            <person name="Adams M.D."/>
            <person name="Myers E.W."/>
            <person name="Smith H.O."/>
            <person name="Venter J.C."/>
        </authorList>
    </citation>
    <scope>NUCLEOTIDE SEQUENCE [LARGE SCALE GENOMIC DNA]</scope>
    <source>
        <strain>Brown Norway</strain>
    </source>
</reference>
<reference key="2">
    <citation type="journal article" date="2004" name="Genome Res.">
        <title>The status, quality, and expansion of the NIH full-length cDNA project: the Mammalian Gene Collection (MGC).</title>
        <authorList>
            <consortium name="The MGC Project Team"/>
        </authorList>
    </citation>
    <scope>NUCLEOTIDE SEQUENCE [LARGE SCALE MRNA]</scope>
    <source>
        <tissue>Prostate</tissue>
    </source>
</reference>
<feature type="chain" id="PRO_0000351481" description="Terminal nucleotidyltransferase 5B">
    <location>
        <begin position="1"/>
        <end position="427"/>
    </location>
</feature>
<feature type="region of interest" description="Disordered" evidence="2">
    <location>
        <begin position="1"/>
        <end position="46"/>
    </location>
</feature>
<feature type="compositionally biased region" description="Acidic residues" evidence="2">
    <location>
        <begin position="1"/>
        <end position="11"/>
    </location>
</feature>
<feature type="compositionally biased region" description="Low complexity" evidence="2">
    <location>
        <begin position="15"/>
        <end position="30"/>
    </location>
</feature>